<sequence length="86" mass="9203">MGRTTKVGSAGRFGPRYGLKIRRRVAAVEAKMKQKHICPVCGRKAVRRISTGIWQCQKCGATFAGGAYLPVTPAGKVAKRVTASKA</sequence>
<evidence type="ECO:0000255" key="1">
    <source>
        <dbReference type="HAMAP-Rule" id="MF_00327"/>
    </source>
</evidence>
<evidence type="ECO:0000305" key="2"/>
<protein>
    <recommendedName>
        <fullName evidence="1">Large ribosomal subunit protein eL43</fullName>
    </recommendedName>
    <alternativeName>
        <fullName evidence="2">50S ribosomal protein L37Ae</fullName>
    </alternativeName>
    <alternativeName>
        <fullName evidence="1">Ribosomal protein L43e</fullName>
    </alternativeName>
</protein>
<organism>
    <name type="scientific">Thermococcus onnurineus (strain NA1)</name>
    <dbReference type="NCBI Taxonomy" id="523850"/>
    <lineage>
        <taxon>Archaea</taxon>
        <taxon>Methanobacteriati</taxon>
        <taxon>Methanobacteriota</taxon>
        <taxon>Thermococci</taxon>
        <taxon>Thermococcales</taxon>
        <taxon>Thermococcaceae</taxon>
        <taxon>Thermococcus</taxon>
    </lineage>
</organism>
<accession>B6YTZ8</accession>
<proteinExistence type="inferred from homology"/>
<dbReference type="EMBL" id="CP000855">
    <property type="protein sequence ID" value="ACJ15940.1"/>
    <property type="molecule type" value="Genomic_DNA"/>
</dbReference>
<dbReference type="RefSeq" id="WP_012571412.1">
    <property type="nucleotide sequence ID" value="NC_011529.1"/>
</dbReference>
<dbReference type="SMR" id="B6YTZ8"/>
<dbReference type="STRING" id="523850.TON_0455"/>
<dbReference type="GeneID" id="7016750"/>
<dbReference type="KEGG" id="ton:TON_0455"/>
<dbReference type="PATRIC" id="fig|523850.10.peg.457"/>
<dbReference type="eggNOG" id="arCOG04208">
    <property type="taxonomic scope" value="Archaea"/>
</dbReference>
<dbReference type="HOGENOM" id="CLU_141199_2_0_2"/>
<dbReference type="OrthoDB" id="372011at2157"/>
<dbReference type="Proteomes" id="UP000002727">
    <property type="component" value="Chromosome"/>
</dbReference>
<dbReference type="GO" id="GO:1990904">
    <property type="term" value="C:ribonucleoprotein complex"/>
    <property type="evidence" value="ECO:0007669"/>
    <property type="project" value="UniProtKB-KW"/>
</dbReference>
<dbReference type="GO" id="GO:0005840">
    <property type="term" value="C:ribosome"/>
    <property type="evidence" value="ECO:0007669"/>
    <property type="project" value="UniProtKB-KW"/>
</dbReference>
<dbReference type="GO" id="GO:0070180">
    <property type="term" value="F:large ribosomal subunit rRNA binding"/>
    <property type="evidence" value="ECO:0007669"/>
    <property type="project" value="UniProtKB-UniRule"/>
</dbReference>
<dbReference type="GO" id="GO:0003735">
    <property type="term" value="F:structural constituent of ribosome"/>
    <property type="evidence" value="ECO:0007669"/>
    <property type="project" value="InterPro"/>
</dbReference>
<dbReference type="GO" id="GO:0008270">
    <property type="term" value="F:zinc ion binding"/>
    <property type="evidence" value="ECO:0007669"/>
    <property type="project" value="UniProtKB-UniRule"/>
</dbReference>
<dbReference type="GO" id="GO:0006412">
    <property type="term" value="P:translation"/>
    <property type="evidence" value="ECO:0007669"/>
    <property type="project" value="UniProtKB-UniRule"/>
</dbReference>
<dbReference type="Gene3D" id="2.20.25.30">
    <property type="match status" value="1"/>
</dbReference>
<dbReference type="HAMAP" id="MF_00327">
    <property type="entry name" value="Ribosomal_eL43"/>
    <property type="match status" value="1"/>
</dbReference>
<dbReference type="InterPro" id="IPR011331">
    <property type="entry name" value="Ribosomal_eL37/eL43"/>
</dbReference>
<dbReference type="InterPro" id="IPR002674">
    <property type="entry name" value="Ribosomal_eL43"/>
</dbReference>
<dbReference type="InterPro" id="IPR050522">
    <property type="entry name" value="Ribosomal_protein_eL43"/>
</dbReference>
<dbReference type="InterPro" id="IPR011332">
    <property type="entry name" value="Ribosomal_zn-bd"/>
</dbReference>
<dbReference type="NCBIfam" id="TIGR00280">
    <property type="entry name" value="eL43_euk_arch"/>
    <property type="match status" value="1"/>
</dbReference>
<dbReference type="NCBIfam" id="NF003058">
    <property type="entry name" value="PRK03976.1"/>
    <property type="match status" value="1"/>
</dbReference>
<dbReference type="PANTHER" id="PTHR48129">
    <property type="entry name" value="60S RIBOSOMAL PROTEIN L37A"/>
    <property type="match status" value="1"/>
</dbReference>
<dbReference type="PANTHER" id="PTHR48129:SF1">
    <property type="entry name" value="LARGE RIBOSOMAL SUBUNIT PROTEIN EL43"/>
    <property type="match status" value="1"/>
</dbReference>
<dbReference type="Pfam" id="PF01780">
    <property type="entry name" value="Ribosomal_L37ae"/>
    <property type="match status" value="1"/>
</dbReference>
<dbReference type="SUPFAM" id="SSF57829">
    <property type="entry name" value="Zn-binding ribosomal proteins"/>
    <property type="match status" value="1"/>
</dbReference>
<gene>
    <name evidence="1" type="primary">rpl37ae</name>
    <name type="ordered locus">TON_0455</name>
</gene>
<name>RL37A_THEON</name>
<comment type="cofactor">
    <cofactor evidence="1">
        <name>Zn(2+)</name>
        <dbReference type="ChEBI" id="CHEBI:29105"/>
    </cofactor>
    <text evidence="1">Binds 1 zinc ion per subunit.</text>
</comment>
<comment type="similarity">
    <text evidence="1">Belongs to the eukaryotic ribosomal protein eL43 family.</text>
</comment>
<reference key="1">
    <citation type="journal article" date="2008" name="J. Bacteriol.">
        <title>The complete genome sequence of Thermococcus onnurineus NA1 reveals a mixed heterotrophic and carboxydotrophic metabolism.</title>
        <authorList>
            <person name="Lee H.S."/>
            <person name="Kang S.G."/>
            <person name="Bae S.S."/>
            <person name="Lim J.K."/>
            <person name="Cho Y."/>
            <person name="Kim Y.J."/>
            <person name="Jeon J.H."/>
            <person name="Cha S.-S."/>
            <person name="Kwon K.K."/>
            <person name="Kim H.-T."/>
            <person name="Park C.-J."/>
            <person name="Lee H.-W."/>
            <person name="Kim S.I."/>
            <person name="Chun J."/>
            <person name="Colwell R.R."/>
            <person name="Kim S.-J."/>
            <person name="Lee J.-H."/>
        </authorList>
    </citation>
    <scope>NUCLEOTIDE SEQUENCE [LARGE SCALE GENOMIC DNA]</scope>
    <source>
        <strain>NA1</strain>
    </source>
</reference>
<feature type="chain" id="PRO_1000116103" description="Large ribosomal subunit protein eL43">
    <location>
        <begin position="1"/>
        <end position="86"/>
    </location>
</feature>
<feature type="zinc finger region" description="C4-type" evidence="1">
    <location>
        <begin position="38"/>
        <end position="59"/>
    </location>
</feature>
<keyword id="KW-0479">Metal-binding</keyword>
<keyword id="KW-0687">Ribonucleoprotein</keyword>
<keyword id="KW-0689">Ribosomal protein</keyword>
<keyword id="KW-0694">RNA-binding</keyword>
<keyword id="KW-0862">Zinc</keyword>
<keyword id="KW-0863">Zinc-finger</keyword>